<reference key="1">
    <citation type="submission" date="2007-03" db="EMBL/GenBank/DDBJ databases">
        <title>Sequencing analysis of Capsella bursa-pastoris JO22 chloroplast DNA.</title>
        <authorList>
            <person name="Hosouchi T."/>
            <person name="Tsuruoka H."/>
            <person name="Kotani H."/>
        </authorList>
    </citation>
    <scope>NUCLEOTIDE SEQUENCE [LARGE SCALE GENOMIC DNA]</scope>
</reference>
<evidence type="ECO:0000250" key="1"/>
<evidence type="ECO:0000255" key="2"/>
<evidence type="ECO:0000305" key="3"/>
<protein>
    <recommendedName>
        <fullName>NAD(P)H-quinone oxidoreductase subunit 6, chloroplastic</fullName>
        <ecNumber>7.1.1.-</ecNumber>
    </recommendedName>
    <alternativeName>
        <fullName>NAD(P)H dehydrogenase subunit 6</fullName>
    </alternativeName>
    <alternativeName>
        <fullName>NADH-plastoquinone oxidoreductase subunit 6</fullName>
    </alternativeName>
</protein>
<gene>
    <name type="primary">ndhG</name>
</gene>
<comment type="function">
    <text evidence="1">NDH shuttles electrons from NAD(P)H:plastoquinone, via FMN and iron-sulfur (Fe-S) centers, to quinones in the photosynthetic chain and possibly in a chloroplast respiratory chain. The immediate electron acceptor for the enzyme in this species is believed to be plastoquinone. Couples the redox reaction to proton translocation, and thus conserves the redox energy in a proton gradient (By similarity).</text>
</comment>
<comment type="catalytic activity">
    <reaction>
        <text>a plastoquinone + NADH + (n+1) H(+)(in) = a plastoquinol + NAD(+) + n H(+)(out)</text>
        <dbReference type="Rhea" id="RHEA:42608"/>
        <dbReference type="Rhea" id="RHEA-COMP:9561"/>
        <dbReference type="Rhea" id="RHEA-COMP:9562"/>
        <dbReference type="ChEBI" id="CHEBI:15378"/>
        <dbReference type="ChEBI" id="CHEBI:17757"/>
        <dbReference type="ChEBI" id="CHEBI:57540"/>
        <dbReference type="ChEBI" id="CHEBI:57945"/>
        <dbReference type="ChEBI" id="CHEBI:62192"/>
    </reaction>
</comment>
<comment type="catalytic activity">
    <reaction>
        <text>a plastoquinone + NADPH + (n+1) H(+)(in) = a plastoquinol + NADP(+) + n H(+)(out)</text>
        <dbReference type="Rhea" id="RHEA:42612"/>
        <dbReference type="Rhea" id="RHEA-COMP:9561"/>
        <dbReference type="Rhea" id="RHEA-COMP:9562"/>
        <dbReference type="ChEBI" id="CHEBI:15378"/>
        <dbReference type="ChEBI" id="CHEBI:17757"/>
        <dbReference type="ChEBI" id="CHEBI:57783"/>
        <dbReference type="ChEBI" id="CHEBI:58349"/>
        <dbReference type="ChEBI" id="CHEBI:62192"/>
    </reaction>
</comment>
<comment type="subunit">
    <text evidence="1">NDH is composed of at least 16 different subunits, 5 of which are encoded in the nucleus.</text>
</comment>
<comment type="subcellular location">
    <subcellularLocation>
        <location evidence="1">Plastid</location>
        <location evidence="1">Chloroplast thylakoid membrane</location>
        <topology evidence="1">Multi-pass membrane protein</topology>
    </subcellularLocation>
</comment>
<comment type="similarity">
    <text evidence="3">Belongs to the complex I subunit 6 family.</text>
</comment>
<dbReference type="EC" id="7.1.1.-"/>
<dbReference type="EMBL" id="AP009371">
    <property type="protein sequence ID" value="BAF50253.1"/>
    <property type="molecule type" value="Genomic_DNA"/>
</dbReference>
<dbReference type="RefSeq" id="YP_001123428.1">
    <property type="nucleotide sequence ID" value="NC_009270.1"/>
</dbReference>
<dbReference type="SMR" id="A4QKP8"/>
<dbReference type="GeneID" id="4961698"/>
<dbReference type="GO" id="GO:0009535">
    <property type="term" value="C:chloroplast thylakoid membrane"/>
    <property type="evidence" value="ECO:0007669"/>
    <property type="project" value="UniProtKB-SubCell"/>
</dbReference>
<dbReference type="GO" id="GO:0008137">
    <property type="term" value="F:NADH dehydrogenase (ubiquinone) activity"/>
    <property type="evidence" value="ECO:0007669"/>
    <property type="project" value="InterPro"/>
</dbReference>
<dbReference type="GO" id="GO:0048038">
    <property type="term" value="F:quinone binding"/>
    <property type="evidence" value="ECO:0007669"/>
    <property type="project" value="UniProtKB-KW"/>
</dbReference>
<dbReference type="FunFam" id="1.20.120.1200:FF:000002">
    <property type="entry name" value="NAD(P)H-quinone oxidoreductase subunit 6, chloroplastic"/>
    <property type="match status" value="1"/>
</dbReference>
<dbReference type="Gene3D" id="1.20.120.1200">
    <property type="entry name" value="NADH-ubiquinone/plastoquinone oxidoreductase chain 6, subunit NuoJ"/>
    <property type="match status" value="1"/>
</dbReference>
<dbReference type="InterPro" id="IPR050290">
    <property type="entry name" value="NAD(P)H-Q_Oxidoreduct_6"/>
</dbReference>
<dbReference type="InterPro" id="IPR001457">
    <property type="entry name" value="NADH_UbQ/plastoQ_OxRdtase_su6"/>
</dbReference>
<dbReference type="InterPro" id="IPR042106">
    <property type="entry name" value="Nuo/plastoQ_OxRdtase_6_NuoJ"/>
</dbReference>
<dbReference type="PANTHER" id="PTHR48479">
    <property type="entry name" value="NAD(P)H-QUINONE OXIDOREDUCTASE SUBUNIT 6, CHLOROPLASTIC"/>
    <property type="match status" value="1"/>
</dbReference>
<dbReference type="PANTHER" id="PTHR48479:SF1">
    <property type="entry name" value="NAD(P)H-QUINONE OXIDOREDUCTASE SUBUNIT 6, CHLOROPLASTIC"/>
    <property type="match status" value="1"/>
</dbReference>
<dbReference type="Pfam" id="PF00499">
    <property type="entry name" value="Oxidored_q3"/>
    <property type="match status" value="1"/>
</dbReference>
<proteinExistence type="inferred from homology"/>
<feature type="chain" id="PRO_0000360234" description="NAD(P)H-quinone oxidoreductase subunit 6, chloroplastic">
    <location>
        <begin position="1"/>
        <end position="176"/>
    </location>
</feature>
<feature type="transmembrane region" description="Helical" evidence="2">
    <location>
        <begin position="10"/>
        <end position="30"/>
    </location>
</feature>
<feature type="transmembrane region" description="Helical" evidence="2">
    <location>
        <begin position="32"/>
        <end position="52"/>
    </location>
</feature>
<feature type="transmembrane region" description="Helical" evidence="2">
    <location>
        <begin position="61"/>
        <end position="81"/>
    </location>
</feature>
<feature type="transmembrane region" description="Helical" evidence="2">
    <location>
        <begin position="92"/>
        <end position="112"/>
    </location>
</feature>
<feature type="transmembrane region" description="Helical" evidence="2">
    <location>
        <begin position="152"/>
        <end position="172"/>
    </location>
</feature>
<geneLocation type="chloroplast"/>
<name>NU6C_CAPBU</name>
<keyword id="KW-0150">Chloroplast</keyword>
<keyword id="KW-0472">Membrane</keyword>
<keyword id="KW-0520">NAD</keyword>
<keyword id="KW-0521">NADP</keyword>
<keyword id="KW-0934">Plastid</keyword>
<keyword id="KW-0618">Plastoquinone</keyword>
<keyword id="KW-0874">Quinone</keyword>
<keyword id="KW-0793">Thylakoid</keyword>
<keyword id="KW-1278">Translocase</keyword>
<keyword id="KW-0812">Transmembrane</keyword>
<keyword id="KW-1133">Transmembrane helix</keyword>
<keyword id="KW-0813">Transport</keyword>
<accession>A4QKP8</accession>
<organism>
    <name type="scientific">Capsella bursa-pastoris</name>
    <name type="common">Shepherd's purse</name>
    <name type="synonym">Thlaspi bursa-pastoris</name>
    <dbReference type="NCBI Taxonomy" id="3719"/>
    <lineage>
        <taxon>Eukaryota</taxon>
        <taxon>Viridiplantae</taxon>
        <taxon>Streptophyta</taxon>
        <taxon>Embryophyta</taxon>
        <taxon>Tracheophyta</taxon>
        <taxon>Spermatophyta</taxon>
        <taxon>Magnoliopsida</taxon>
        <taxon>eudicotyledons</taxon>
        <taxon>Gunneridae</taxon>
        <taxon>Pentapetalae</taxon>
        <taxon>rosids</taxon>
        <taxon>malvids</taxon>
        <taxon>Brassicales</taxon>
        <taxon>Brassicaceae</taxon>
        <taxon>Camelineae</taxon>
        <taxon>Capsella</taxon>
    </lineage>
</organism>
<sequence>MDLPGPIHDFLLVFLGSGLLVGGLGVVLLPNPIFSAFSLGFVLVCISLLYILSNSHFVAAAQLLIYVGAINVLIIFAVMFMNDSEYSTDFNLWTVGNGITSLVCTTILFLLMSTILDTSWYGVIWTTKLNQILEQDLISNSQQIGIHLSTDFFLPFELISIILLVALIGAISVARQ</sequence>